<evidence type="ECO:0000250" key="1"/>
<evidence type="ECO:0000255" key="2">
    <source>
        <dbReference type="HAMAP-Rule" id="MF_01025"/>
    </source>
</evidence>
<evidence type="ECO:0000305" key="3"/>
<sequence>MSQQVIIFDTTLRDGEQALQASLSAKEKLQIALALERMGVDVMEVGFPVSSPGDFESVQTIARTIKNSRVCALARCVEKDIDVAAQALKVADAFRIHTFIATSPMHIATKLRSTLDEVIERAVYMVKRARNYTDDVEFSCEDAGRTPVDDLARVVEAAINAGARTINIPDTVGYTMPFEFAGIISGLYERVPNIDKAIISVHTHDDLGIAVGNSLAAVHAGARQVEGAMNGIGERAGNCALEEVIMAIKVRKDIINVHTNINHHEIWRTSQTVSQICNMPIPANKAIVGSGAFAHSSGIHQDGVLKNRENYEIMTPESIGLNQIQLNLTSRSGRAAVKHRMEEMGYKDTDYNMGHLYDAFLKLADKKGQVFDYDLEALAFINKQQEEPEHFRLDYFSVQSGSSDIATASVKLACGEEIKAEAANGNGPVDAIYQAINRITGYDVELVKYDLNAKGQGKDALGQVDIVVNHHGRRFHGVGLATDIVESSAKAMVHVLNNIWRAAEVEKELQRKAQNKENNKETV</sequence>
<gene>
    <name evidence="2" type="primary">leuA</name>
    <name type="ordered locus">STY0132</name>
    <name type="ordered locus">t0117</name>
</gene>
<dbReference type="EC" id="2.3.3.13" evidence="2"/>
<dbReference type="EMBL" id="AL513382">
    <property type="protein sequence ID" value="CAD01270.1"/>
    <property type="molecule type" value="Genomic_DNA"/>
</dbReference>
<dbReference type="EMBL" id="AE014613">
    <property type="protein sequence ID" value="AAO67849.1"/>
    <property type="molecule type" value="Genomic_DNA"/>
</dbReference>
<dbReference type="RefSeq" id="NP_454725.1">
    <property type="nucleotide sequence ID" value="NC_003198.1"/>
</dbReference>
<dbReference type="RefSeq" id="WP_000082813.1">
    <property type="nucleotide sequence ID" value="NZ_WSUR01000009.1"/>
</dbReference>
<dbReference type="SMR" id="Q8Z9I0"/>
<dbReference type="STRING" id="220341.gene:17584172"/>
<dbReference type="KEGG" id="stt:t0117"/>
<dbReference type="KEGG" id="sty:STY0132"/>
<dbReference type="PATRIC" id="fig|220341.7.peg.133"/>
<dbReference type="eggNOG" id="COG0119">
    <property type="taxonomic scope" value="Bacteria"/>
</dbReference>
<dbReference type="HOGENOM" id="CLU_022158_0_1_6"/>
<dbReference type="OMA" id="NTMRMLV"/>
<dbReference type="OrthoDB" id="9803573at2"/>
<dbReference type="UniPathway" id="UPA00048">
    <property type="reaction ID" value="UER00070"/>
</dbReference>
<dbReference type="Proteomes" id="UP000000541">
    <property type="component" value="Chromosome"/>
</dbReference>
<dbReference type="Proteomes" id="UP000002670">
    <property type="component" value="Chromosome"/>
</dbReference>
<dbReference type="GO" id="GO:0005829">
    <property type="term" value="C:cytosol"/>
    <property type="evidence" value="ECO:0007669"/>
    <property type="project" value="TreeGrafter"/>
</dbReference>
<dbReference type="GO" id="GO:0003852">
    <property type="term" value="F:2-isopropylmalate synthase activity"/>
    <property type="evidence" value="ECO:0007669"/>
    <property type="project" value="UniProtKB-UniRule"/>
</dbReference>
<dbReference type="GO" id="GO:0003985">
    <property type="term" value="F:acetyl-CoA C-acetyltransferase activity"/>
    <property type="evidence" value="ECO:0007669"/>
    <property type="project" value="UniProtKB-UniRule"/>
</dbReference>
<dbReference type="GO" id="GO:0030145">
    <property type="term" value="F:manganese ion binding"/>
    <property type="evidence" value="ECO:0007669"/>
    <property type="project" value="UniProtKB-UniRule"/>
</dbReference>
<dbReference type="GO" id="GO:0009098">
    <property type="term" value="P:L-leucine biosynthetic process"/>
    <property type="evidence" value="ECO:0007669"/>
    <property type="project" value="UniProtKB-UniRule"/>
</dbReference>
<dbReference type="CDD" id="cd07940">
    <property type="entry name" value="DRE_TIM_IPMS"/>
    <property type="match status" value="1"/>
</dbReference>
<dbReference type="FunFam" id="1.10.238.260:FF:000001">
    <property type="entry name" value="2-isopropylmalate synthase"/>
    <property type="match status" value="1"/>
</dbReference>
<dbReference type="FunFam" id="3.20.20.70:FF:000010">
    <property type="entry name" value="2-isopropylmalate synthase"/>
    <property type="match status" value="1"/>
</dbReference>
<dbReference type="FunFam" id="3.30.160.270:FF:000001">
    <property type="entry name" value="2-isopropylmalate synthase"/>
    <property type="match status" value="1"/>
</dbReference>
<dbReference type="Gene3D" id="1.10.238.260">
    <property type="match status" value="1"/>
</dbReference>
<dbReference type="Gene3D" id="3.30.160.270">
    <property type="match status" value="1"/>
</dbReference>
<dbReference type="Gene3D" id="3.20.20.70">
    <property type="entry name" value="Aldolase class I"/>
    <property type="match status" value="1"/>
</dbReference>
<dbReference type="HAMAP" id="MF_01025">
    <property type="entry name" value="LeuA_type1"/>
    <property type="match status" value="1"/>
</dbReference>
<dbReference type="InterPro" id="IPR050073">
    <property type="entry name" value="2-IPM_HCS-like"/>
</dbReference>
<dbReference type="InterPro" id="IPR013709">
    <property type="entry name" value="2-isopropylmalate_synth_dimer"/>
</dbReference>
<dbReference type="InterPro" id="IPR002034">
    <property type="entry name" value="AIPM/Hcit_synth_CS"/>
</dbReference>
<dbReference type="InterPro" id="IPR013785">
    <property type="entry name" value="Aldolase_TIM"/>
</dbReference>
<dbReference type="InterPro" id="IPR054691">
    <property type="entry name" value="LeuA/HCS_post-cat"/>
</dbReference>
<dbReference type="InterPro" id="IPR036230">
    <property type="entry name" value="LeuA_allosteric_dom_sf"/>
</dbReference>
<dbReference type="InterPro" id="IPR005671">
    <property type="entry name" value="LeuA_bact_synth"/>
</dbReference>
<dbReference type="InterPro" id="IPR000891">
    <property type="entry name" value="PYR_CT"/>
</dbReference>
<dbReference type="NCBIfam" id="TIGR00973">
    <property type="entry name" value="leuA_bact"/>
    <property type="match status" value="1"/>
</dbReference>
<dbReference type="NCBIfam" id="NF002084">
    <property type="entry name" value="PRK00915.1-1"/>
    <property type="match status" value="1"/>
</dbReference>
<dbReference type="NCBIfam" id="NF002086">
    <property type="entry name" value="PRK00915.1-3"/>
    <property type="match status" value="1"/>
</dbReference>
<dbReference type="PANTHER" id="PTHR10277:SF9">
    <property type="entry name" value="2-ISOPROPYLMALATE SYNTHASE 1, CHLOROPLASTIC-RELATED"/>
    <property type="match status" value="1"/>
</dbReference>
<dbReference type="PANTHER" id="PTHR10277">
    <property type="entry name" value="HOMOCITRATE SYNTHASE-RELATED"/>
    <property type="match status" value="1"/>
</dbReference>
<dbReference type="Pfam" id="PF22617">
    <property type="entry name" value="HCS_D2"/>
    <property type="match status" value="1"/>
</dbReference>
<dbReference type="Pfam" id="PF00682">
    <property type="entry name" value="HMGL-like"/>
    <property type="match status" value="1"/>
</dbReference>
<dbReference type="Pfam" id="PF08502">
    <property type="entry name" value="LeuA_dimer"/>
    <property type="match status" value="1"/>
</dbReference>
<dbReference type="SMART" id="SM00917">
    <property type="entry name" value="LeuA_dimer"/>
    <property type="match status" value="1"/>
</dbReference>
<dbReference type="SUPFAM" id="SSF110921">
    <property type="entry name" value="2-isopropylmalate synthase LeuA, allosteric (dimerisation) domain"/>
    <property type="match status" value="1"/>
</dbReference>
<dbReference type="SUPFAM" id="SSF51569">
    <property type="entry name" value="Aldolase"/>
    <property type="match status" value="1"/>
</dbReference>
<dbReference type="PROSITE" id="PS00815">
    <property type="entry name" value="AIPM_HOMOCIT_SYNTH_1"/>
    <property type="match status" value="1"/>
</dbReference>
<dbReference type="PROSITE" id="PS00816">
    <property type="entry name" value="AIPM_HOMOCIT_SYNTH_2"/>
    <property type="match status" value="1"/>
</dbReference>
<dbReference type="PROSITE" id="PS50991">
    <property type="entry name" value="PYR_CT"/>
    <property type="match status" value="1"/>
</dbReference>
<proteinExistence type="inferred from homology"/>
<feature type="initiator methionine" description="Removed" evidence="1">
    <location>
        <position position="1"/>
    </location>
</feature>
<feature type="chain" id="PRO_0000140374" description="2-isopropylmalate synthase">
    <location>
        <begin position="2"/>
        <end position="523"/>
    </location>
</feature>
<feature type="domain" description="Pyruvate carboxyltransferase" evidence="2">
    <location>
        <begin position="5"/>
        <end position="267"/>
    </location>
</feature>
<feature type="region of interest" description="Regulatory domain" evidence="2">
    <location>
        <begin position="392"/>
        <end position="523"/>
    </location>
</feature>
<feature type="binding site" evidence="2">
    <location>
        <position position="14"/>
    </location>
    <ligand>
        <name>Mn(2+)</name>
        <dbReference type="ChEBI" id="CHEBI:29035"/>
    </ligand>
</feature>
<feature type="binding site" evidence="2">
    <location>
        <position position="202"/>
    </location>
    <ligand>
        <name>Mn(2+)</name>
        <dbReference type="ChEBI" id="CHEBI:29035"/>
    </ligand>
</feature>
<feature type="binding site" evidence="2">
    <location>
        <position position="204"/>
    </location>
    <ligand>
        <name>Mn(2+)</name>
        <dbReference type="ChEBI" id="CHEBI:29035"/>
    </ligand>
</feature>
<feature type="binding site" evidence="2">
    <location>
        <position position="238"/>
    </location>
    <ligand>
        <name>Mn(2+)</name>
        <dbReference type="ChEBI" id="CHEBI:29035"/>
    </ligand>
</feature>
<protein>
    <recommendedName>
        <fullName evidence="2">2-isopropylmalate synthase</fullName>
        <ecNumber evidence="2">2.3.3.13</ecNumber>
    </recommendedName>
    <alternativeName>
        <fullName evidence="2">Alpha-IPM synthase</fullName>
    </alternativeName>
    <alternativeName>
        <fullName evidence="2">Alpha-isopropylmalate synthase</fullName>
    </alternativeName>
</protein>
<reference key="1">
    <citation type="journal article" date="2001" name="Nature">
        <title>Complete genome sequence of a multiple drug resistant Salmonella enterica serovar Typhi CT18.</title>
        <authorList>
            <person name="Parkhill J."/>
            <person name="Dougan G."/>
            <person name="James K.D."/>
            <person name="Thomson N.R."/>
            <person name="Pickard D."/>
            <person name="Wain J."/>
            <person name="Churcher C.M."/>
            <person name="Mungall K.L."/>
            <person name="Bentley S.D."/>
            <person name="Holden M.T.G."/>
            <person name="Sebaihia M."/>
            <person name="Baker S."/>
            <person name="Basham D."/>
            <person name="Brooks K."/>
            <person name="Chillingworth T."/>
            <person name="Connerton P."/>
            <person name="Cronin A."/>
            <person name="Davis P."/>
            <person name="Davies R.M."/>
            <person name="Dowd L."/>
            <person name="White N."/>
            <person name="Farrar J."/>
            <person name="Feltwell T."/>
            <person name="Hamlin N."/>
            <person name="Haque A."/>
            <person name="Hien T.T."/>
            <person name="Holroyd S."/>
            <person name="Jagels K."/>
            <person name="Krogh A."/>
            <person name="Larsen T.S."/>
            <person name="Leather S."/>
            <person name="Moule S."/>
            <person name="O'Gaora P."/>
            <person name="Parry C."/>
            <person name="Quail M.A."/>
            <person name="Rutherford K.M."/>
            <person name="Simmonds M."/>
            <person name="Skelton J."/>
            <person name="Stevens K."/>
            <person name="Whitehead S."/>
            <person name="Barrell B.G."/>
        </authorList>
    </citation>
    <scope>NUCLEOTIDE SEQUENCE [LARGE SCALE GENOMIC DNA]</scope>
    <source>
        <strain>CT18</strain>
    </source>
</reference>
<reference key="2">
    <citation type="journal article" date="2003" name="J. Bacteriol.">
        <title>Comparative genomics of Salmonella enterica serovar Typhi strains Ty2 and CT18.</title>
        <authorList>
            <person name="Deng W."/>
            <person name="Liou S.-R."/>
            <person name="Plunkett G. III"/>
            <person name="Mayhew G.F."/>
            <person name="Rose D.J."/>
            <person name="Burland V."/>
            <person name="Kodoyianni V."/>
            <person name="Schwartz D.C."/>
            <person name="Blattner F.R."/>
        </authorList>
    </citation>
    <scope>NUCLEOTIDE SEQUENCE [LARGE SCALE GENOMIC DNA]</scope>
    <source>
        <strain>ATCC 700931 / Ty2</strain>
    </source>
</reference>
<comment type="function">
    <text evidence="2">Catalyzes the condensation of the acetyl group of acetyl-CoA with 3-methyl-2-oxobutanoate (2-ketoisovalerate) to form 3-carboxy-3-hydroxy-4-methylpentanoate (2-isopropylmalate).</text>
</comment>
<comment type="catalytic activity">
    <reaction evidence="2">
        <text>3-methyl-2-oxobutanoate + acetyl-CoA + H2O = (2S)-2-isopropylmalate + CoA + H(+)</text>
        <dbReference type="Rhea" id="RHEA:21524"/>
        <dbReference type="ChEBI" id="CHEBI:1178"/>
        <dbReference type="ChEBI" id="CHEBI:11851"/>
        <dbReference type="ChEBI" id="CHEBI:15377"/>
        <dbReference type="ChEBI" id="CHEBI:15378"/>
        <dbReference type="ChEBI" id="CHEBI:57287"/>
        <dbReference type="ChEBI" id="CHEBI:57288"/>
        <dbReference type="EC" id="2.3.3.13"/>
    </reaction>
</comment>
<comment type="cofactor">
    <cofactor evidence="2">
        <name>Mn(2+)</name>
        <dbReference type="ChEBI" id="CHEBI:29035"/>
    </cofactor>
</comment>
<comment type="pathway">
    <text evidence="2">Amino-acid biosynthesis; L-leucine biosynthesis; L-leucine from 3-methyl-2-oxobutanoate: step 1/4.</text>
</comment>
<comment type="subunit">
    <text evidence="2">Homodimer.</text>
</comment>
<comment type="subcellular location">
    <subcellularLocation>
        <location evidence="2">Cytoplasm</location>
    </subcellularLocation>
</comment>
<comment type="similarity">
    <text evidence="2 3">Belongs to the alpha-IPM synthase/homocitrate synthase family. LeuA type 1 subfamily.</text>
</comment>
<accession>Q8Z9I0</accession>
<name>LEU1_SALTI</name>
<keyword id="KW-0028">Amino-acid biosynthesis</keyword>
<keyword id="KW-0100">Branched-chain amino acid biosynthesis</keyword>
<keyword id="KW-0963">Cytoplasm</keyword>
<keyword id="KW-0432">Leucine biosynthesis</keyword>
<keyword id="KW-0464">Manganese</keyword>
<keyword id="KW-0479">Metal-binding</keyword>
<keyword id="KW-0808">Transferase</keyword>
<organism>
    <name type="scientific">Salmonella typhi</name>
    <dbReference type="NCBI Taxonomy" id="90370"/>
    <lineage>
        <taxon>Bacteria</taxon>
        <taxon>Pseudomonadati</taxon>
        <taxon>Pseudomonadota</taxon>
        <taxon>Gammaproteobacteria</taxon>
        <taxon>Enterobacterales</taxon>
        <taxon>Enterobacteriaceae</taxon>
        <taxon>Salmonella</taxon>
    </lineage>
</organism>